<evidence type="ECO:0000255" key="1"/>
<evidence type="ECO:0000255" key="2">
    <source>
        <dbReference type="PROSITE-ProRule" id="PRU00521"/>
    </source>
</evidence>
<evidence type="ECO:0000256" key="3">
    <source>
        <dbReference type="SAM" id="MobiDB-lite"/>
    </source>
</evidence>
<evidence type="ECO:0000305" key="4"/>
<protein>
    <recommendedName>
        <fullName>Neuropeptide Y receptor type 2</fullName>
        <shortName>NPY2-R</shortName>
    </recommendedName>
    <alternativeName>
        <fullName>NPY-Y2 receptor</fullName>
        <shortName>Y2 receptor</shortName>
    </alternativeName>
</protein>
<proteinExistence type="evidence at transcript level"/>
<name>NPY2R_MOUSE</name>
<accession>P97295</accession>
<accession>F7C6W7</accession>
<accession>Q8BWV1</accession>
<reference key="1">
    <citation type="journal article" date="1996" name="Biochim. Biophys. Acta">
        <title>Cloning and functional expression of a cDNA encoding a mouse type 2 neuropeptide Y receptor.</title>
        <authorList>
            <person name="Nakamura M."/>
            <person name="Aoki Y."/>
            <person name="Hirano D."/>
        </authorList>
    </citation>
    <scope>NUCLEOTIDE SEQUENCE [MRNA]</scope>
    <source>
        <tissue>Brain</tissue>
    </source>
</reference>
<reference key="2">
    <citation type="journal article" date="2005" name="Science">
        <title>The transcriptional landscape of the mammalian genome.</title>
        <authorList>
            <person name="Carninci P."/>
            <person name="Kasukawa T."/>
            <person name="Katayama S."/>
            <person name="Gough J."/>
            <person name="Frith M.C."/>
            <person name="Maeda N."/>
            <person name="Oyama R."/>
            <person name="Ravasi T."/>
            <person name="Lenhard B."/>
            <person name="Wells C."/>
            <person name="Kodzius R."/>
            <person name="Shimokawa K."/>
            <person name="Bajic V.B."/>
            <person name="Brenner S.E."/>
            <person name="Batalov S."/>
            <person name="Forrest A.R."/>
            <person name="Zavolan M."/>
            <person name="Davis M.J."/>
            <person name="Wilming L.G."/>
            <person name="Aidinis V."/>
            <person name="Allen J.E."/>
            <person name="Ambesi-Impiombato A."/>
            <person name="Apweiler R."/>
            <person name="Aturaliya R.N."/>
            <person name="Bailey T.L."/>
            <person name="Bansal M."/>
            <person name="Baxter L."/>
            <person name="Beisel K.W."/>
            <person name="Bersano T."/>
            <person name="Bono H."/>
            <person name="Chalk A.M."/>
            <person name="Chiu K.P."/>
            <person name="Choudhary V."/>
            <person name="Christoffels A."/>
            <person name="Clutterbuck D.R."/>
            <person name="Crowe M.L."/>
            <person name="Dalla E."/>
            <person name="Dalrymple B.P."/>
            <person name="de Bono B."/>
            <person name="Della Gatta G."/>
            <person name="di Bernardo D."/>
            <person name="Down T."/>
            <person name="Engstrom P."/>
            <person name="Fagiolini M."/>
            <person name="Faulkner G."/>
            <person name="Fletcher C.F."/>
            <person name="Fukushima T."/>
            <person name="Furuno M."/>
            <person name="Futaki S."/>
            <person name="Gariboldi M."/>
            <person name="Georgii-Hemming P."/>
            <person name="Gingeras T.R."/>
            <person name="Gojobori T."/>
            <person name="Green R.E."/>
            <person name="Gustincich S."/>
            <person name="Harbers M."/>
            <person name="Hayashi Y."/>
            <person name="Hensch T.K."/>
            <person name="Hirokawa N."/>
            <person name="Hill D."/>
            <person name="Huminiecki L."/>
            <person name="Iacono M."/>
            <person name="Ikeo K."/>
            <person name="Iwama A."/>
            <person name="Ishikawa T."/>
            <person name="Jakt M."/>
            <person name="Kanapin A."/>
            <person name="Katoh M."/>
            <person name="Kawasawa Y."/>
            <person name="Kelso J."/>
            <person name="Kitamura H."/>
            <person name="Kitano H."/>
            <person name="Kollias G."/>
            <person name="Krishnan S.P."/>
            <person name="Kruger A."/>
            <person name="Kummerfeld S.K."/>
            <person name="Kurochkin I.V."/>
            <person name="Lareau L.F."/>
            <person name="Lazarevic D."/>
            <person name="Lipovich L."/>
            <person name="Liu J."/>
            <person name="Liuni S."/>
            <person name="McWilliam S."/>
            <person name="Madan Babu M."/>
            <person name="Madera M."/>
            <person name="Marchionni L."/>
            <person name="Matsuda H."/>
            <person name="Matsuzawa S."/>
            <person name="Miki H."/>
            <person name="Mignone F."/>
            <person name="Miyake S."/>
            <person name="Morris K."/>
            <person name="Mottagui-Tabar S."/>
            <person name="Mulder N."/>
            <person name="Nakano N."/>
            <person name="Nakauchi H."/>
            <person name="Ng P."/>
            <person name="Nilsson R."/>
            <person name="Nishiguchi S."/>
            <person name="Nishikawa S."/>
            <person name="Nori F."/>
            <person name="Ohara O."/>
            <person name="Okazaki Y."/>
            <person name="Orlando V."/>
            <person name="Pang K.C."/>
            <person name="Pavan W.J."/>
            <person name="Pavesi G."/>
            <person name="Pesole G."/>
            <person name="Petrovsky N."/>
            <person name="Piazza S."/>
            <person name="Reed J."/>
            <person name="Reid J.F."/>
            <person name="Ring B.Z."/>
            <person name="Ringwald M."/>
            <person name="Rost B."/>
            <person name="Ruan Y."/>
            <person name="Salzberg S.L."/>
            <person name="Sandelin A."/>
            <person name="Schneider C."/>
            <person name="Schoenbach C."/>
            <person name="Sekiguchi K."/>
            <person name="Semple C.A."/>
            <person name="Seno S."/>
            <person name="Sessa L."/>
            <person name="Sheng Y."/>
            <person name="Shibata Y."/>
            <person name="Shimada H."/>
            <person name="Shimada K."/>
            <person name="Silva D."/>
            <person name="Sinclair B."/>
            <person name="Sperling S."/>
            <person name="Stupka E."/>
            <person name="Sugiura K."/>
            <person name="Sultana R."/>
            <person name="Takenaka Y."/>
            <person name="Taki K."/>
            <person name="Tammoja K."/>
            <person name="Tan S.L."/>
            <person name="Tang S."/>
            <person name="Taylor M.S."/>
            <person name="Tegner J."/>
            <person name="Teichmann S.A."/>
            <person name="Ueda H.R."/>
            <person name="van Nimwegen E."/>
            <person name="Verardo R."/>
            <person name="Wei C.L."/>
            <person name="Yagi K."/>
            <person name="Yamanishi H."/>
            <person name="Zabarovsky E."/>
            <person name="Zhu S."/>
            <person name="Zimmer A."/>
            <person name="Hide W."/>
            <person name="Bult C."/>
            <person name="Grimmond S.M."/>
            <person name="Teasdale R.D."/>
            <person name="Liu E.T."/>
            <person name="Brusic V."/>
            <person name="Quackenbush J."/>
            <person name="Wahlestedt C."/>
            <person name="Mattick J.S."/>
            <person name="Hume D.A."/>
            <person name="Kai C."/>
            <person name="Sasaki D."/>
            <person name="Tomaru Y."/>
            <person name="Fukuda S."/>
            <person name="Kanamori-Katayama M."/>
            <person name="Suzuki M."/>
            <person name="Aoki J."/>
            <person name="Arakawa T."/>
            <person name="Iida J."/>
            <person name="Imamura K."/>
            <person name="Itoh M."/>
            <person name="Kato T."/>
            <person name="Kawaji H."/>
            <person name="Kawagashira N."/>
            <person name="Kawashima T."/>
            <person name="Kojima M."/>
            <person name="Kondo S."/>
            <person name="Konno H."/>
            <person name="Nakano K."/>
            <person name="Ninomiya N."/>
            <person name="Nishio T."/>
            <person name="Okada M."/>
            <person name="Plessy C."/>
            <person name="Shibata K."/>
            <person name="Shiraki T."/>
            <person name="Suzuki S."/>
            <person name="Tagami M."/>
            <person name="Waki K."/>
            <person name="Watahiki A."/>
            <person name="Okamura-Oho Y."/>
            <person name="Suzuki H."/>
            <person name="Kawai J."/>
            <person name="Hayashizaki Y."/>
        </authorList>
    </citation>
    <scope>NUCLEOTIDE SEQUENCE [LARGE SCALE MRNA]</scope>
    <source>
        <strain>C57BL/6J</strain>
        <tissue>Hippocampus</tissue>
    </source>
</reference>
<reference key="3">
    <citation type="journal article" date="2009" name="PLoS Biol.">
        <title>Lineage-specific biology revealed by a finished genome assembly of the mouse.</title>
        <authorList>
            <person name="Church D.M."/>
            <person name="Goodstadt L."/>
            <person name="Hillier L.W."/>
            <person name="Zody M.C."/>
            <person name="Goldstein S."/>
            <person name="She X."/>
            <person name="Bult C.J."/>
            <person name="Agarwala R."/>
            <person name="Cherry J.L."/>
            <person name="DiCuccio M."/>
            <person name="Hlavina W."/>
            <person name="Kapustin Y."/>
            <person name="Meric P."/>
            <person name="Maglott D."/>
            <person name="Birtle Z."/>
            <person name="Marques A.C."/>
            <person name="Graves T."/>
            <person name="Zhou S."/>
            <person name="Teague B."/>
            <person name="Potamousis K."/>
            <person name="Churas C."/>
            <person name="Place M."/>
            <person name="Herschleb J."/>
            <person name="Runnheim R."/>
            <person name="Forrest D."/>
            <person name="Amos-Landgraf J."/>
            <person name="Schwartz D.C."/>
            <person name="Cheng Z."/>
            <person name="Lindblad-Toh K."/>
            <person name="Eichler E.E."/>
            <person name="Ponting C.P."/>
        </authorList>
    </citation>
    <scope>NUCLEOTIDE SEQUENCE [LARGE SCALE GENOMIC DNA]</scope>
    <source>
        <strain>C57BL/6J</strain>
    </source>
</reference>
<reference key="4">
    <citation type="submission" date="2005-07" db="EMBL/GenBank/DDBJ databases">
        <authorList>
            <person name="Mural R.J."/>
            <person name="Adams M.D."/>
            <person name="Myers E.W."/>
            <person name="Smith H.O."/>
            <person name="Venter J.C."/>
        </authorList>
    </citation>
    <scope>NUCLEOTIDE SEQUENCE [LARGE SCALE GENOMIC DNA]</scope>
</reference>
<reference key="5">
    <citation type="journal article" date="2004" name="Genome Res.">
        <title>The status, quality, and expansion of the NIH full-length cDNA project: the Mammalian Gene Collection (MGC).</title>
        <authorList>
            <consortium name="The MGC Project Team"/>
        </authorList>
    </citation>
    <scope>NUCLEOTIDE SEQUENCE [LARGE SCALE MRNA]</scope>
</reference>
<sequence>MGPVGAEADENQTVEVKVEPYGPGHTTPRGELPPDPEPELIDSTKLVEVQVILILAYCSIILLGVVGNSLVIHVVIKFKSMRTVTNFFIANLAVADLLVNTLCLPFTLTYTLMGEWKMGPVLCHLVPYAQGLAVQVSTITLTVIALDRHRCIVYHLESKISKRISFLIIGLAWGISALLASPLAIFREYSLIEIIPDFEIVACTEKWPGEEKSVYGTVYSLSTLLILYVLPLGIISFSYTRIWSKLRNHVSPGAASDHYHQRRHKMTKMLVCVVVVFAVSWLPLHAFQLAVDIDSHVLDLKEYKLIFTVFHIIAMCSTFANPLLYGWMNSNYRKAFLSAFRCEQRLDAIHSEVSMTFKAKKNLEVKKNNGPTDSFSEATNV</sequence>
<dbReference type="EMBL" id="D86238">
    <property type="protein sequence ID" value="BAA13050.1"/>
    <property type="status" value="ALT_INIT"/>
    <property type="molecule type" value="mRNA"/>
</dbReference>
<dbReference type="EMBL" id="AK049892">
    <property type="protein sequence ID" value="BAC33975.1"/>
    <property type="molecule type" value="mRNA"/>
</dbReference>
<dbReference type="EMBL" id="AC091478">
    <property type="status" value="NOT_ANNOTATED_CDS"/>
    <property type="molecule type" value="Genomic_DNA"/>
</dbReference>
<dbReference type="EMBL" id="CH466547">
    <property type="protein sequence ID" value="EDL15430.1"/>
    <property type="molecule type" value="Genomic_DNA"/>
</dbReference>
<dbReference type="EMBL" id="CH466547">
    <property type="protein sequence ID" value="EDL15431.1"/>
    <property type="molecule type" value="Genomic_DNA"/>
</dbReference>
<dbReference type="EMBL" id="BC104490">
    <property type="protein sequence ID" value="AAI04491.1"/>
    <property type="molecule type" value="mRNA"/>
</dbReference>
<dbReference type="EMBL" id="BC104734">
    <property type="protein sequence ID" value="AAI04735.1"/>
    <property type="molecule type" value="mRNA"/>
</dbReference>
<dbReference type="CCDS" id="CCDS59646.1"/>
<dbReference type="RefSeq" id="NP_001397372.1">
    <property type="nucleotide sequence ID" value="NM_001410443.1"/>
</dbReference>
<dbReference type="RefSeq" id="NP_001397373.1">
    <property type="nucleotide sequence ID" value="NM_001410444.1"/>
</dbReference>
<dbReference type="RefSeq" id="NP_001397374.1">
    <property type="nucleotide sequence ID" value="NM_001410445.1"/>
</dbReference>
<dbReference type="RefSeq" id="NP_032757.2">
    <property type="nucleotide sequence ID" value="NM_008731.4"/>
</dbReference>
<dbReference type="RefSeq" id="XP_006501178.1">
    <property type="nucleotide sequence ID" value="XM_006501115.1"/>
</dbReference>
<dbReference type="RefSeq" id="XP_006501179.1">
    <property type="nucleotide sequence ID" value="XM_006501116.1"/>
</dbReference>
<dbReference type="SMR" id="P97295"/>
<dbReference type="CORUM" id="P97295"/>
<dbReference type="FunCoup" id="P97295">
    <property type="interactions" value="627"/>
</dbReference>
<dbReference type="STRING" id="10090.ENSMUSP00000029633"/>
<dbReference type="BindingDB" id="P97295"/>
<dbReference type="ChEMBL" id="CHEMBL4739850"/>
<dbReference type="GlyCosmos" id="P97295">
    <property type="glycosylation" value="1 site, No reported glycans"/>
</dbReference>
<dbReference type="GlyGen" id="P97295">
    <property type="glycosylation" value="2 sites"/>
</dbReference>
<dbReference type="iPTMnet" id="P97295"/>
<dbReference type="PhosphoSitePlus" id="P97295"/>
<dbReference type="PaxDb" id="10090-ENSMUSP00000029633"/>
<dbReference type="ProteomicsDB" id="253100"/>
<dbReference type="Antibodypedia" id="2964">
    <property type="antibodies" value="329 antibodies from 38 providers"/>
</dbReference>
<dbReference type="DNASU" id="18167"/>
<dbReference type="Ensembl" id="ENSMUST00000029633.5">
    <property type="protein sequence ID" value="ENSMUSP00000029633.5"/>
    <property type="gene ID" value="ENSMUSG00000028004.13"/>
</dbReference>
<dbReference type="Ensembl" id="ENSMUST00000098997.5">
    <property type="protein sequence ID" value="ENSMUSP00000096595.5"/>
    <property type="gene ID" value="ENSMUSG00000028004.13"/>
</dbReference>
<dbReference type="Ensembl" id="ENSMUST00000182831.2">
    <property type="protein sequence ID" value="ENSMUSP00000138282.2"/>
    <property type="gene ID" value="ENSMUSG00000028004.13"/>
</dbReference>
<dbReference type="GeneID" id="18167"/>
<dbReference type="KEGG" id="mmu:18167"/>
<dbReference type="UCSC" id="uc008ppa.1">
    <property type="organism name" value="mouse"/>
</dbReference>
<dbReference type="AGR" id="MGI:108418"/>
<dbReference type="CTD" id="4887"/>
<dbReference type="MGI" id="MGI:108418">
    <property type="gene designation" value="Npy2r"/>
</dbReference>
<dbReference type="VEuPathDB" id="HostDB:ENSMUSG00000028004"/>
<dbReference type="eggNOG" id="KOG3656">
    <property type="taxonomic scope" value="Eukaryota"/>
</dbReference>
<dbReference type="GeneTree" id="ENSGT00940000155973"/>
<dbReference type="HOGENOM" id="CLU_009579_6_1_1"/>
<dbReference type="InParanoid" id="P97295"/>
<dbReference type="OMA" id="WPGKNTD"/>
<dbReference type="OrthoDB" id="9046662at2759"/>
<dbReference type="PhylomeDB" id="P97295"/>
<dbReference type="Reactome" id="R-MMU-375276">
    <property type="pathway name" value="Peptide ligand-binding receptors"/>
</dbReference>
<dbReference type="Reactome" id="R-MMU-418594">
    <property type="pathway name" value="G alpha (i) signalling events"/>
</dbReference>
<dbReference type="BioGRID-ORCS" id="18167">
    <property type="hits" value="2 hits in 78 CRISPR screens"/>
</dbReference>
<dbReference type="PRO" id="PR:P97295"/>
<dbReference type="Proteomes" id="UP000000589">
    <property type="component" value="Chromosome 3"/>
</dbReference>
<dbReference type="RNAct" id="P97295">
    <property type="molecule type" value="protein"/>
</dbReference>
<dbReference type="Bgee" id="ENSMUSG00000028004">
    <property type="expression patterns" value="Expressed in median eminence of neurohypophysis and 85 other cell types or tissues"/>
</dbReference>
<dbReference type="ExpressionAtlas" id="P97295">
    <property type="expression patterns" value="baseline and differential"/>
</dbReference>
<dbReference type="GO" id="GO:0005929">
    <property type="term" value="C:cilium"/>
    <property type="evidence" value="ECO:0000314"/>
    <property type="project" value="MGI"/>
</dbReference>
<dbReference type="GO" id="GO:0098978">
    <property type="term" value="C:glutamatergic synapse"/>
    <property type="evidence" value="ECO:0007669"/>
    <property type="project" value="Ensembl"/>
</dbReference>
<dbReference type="GO" id="GO:0097730">
    <property type="term" value="C:non-motile cilium"/>
    <property type="evidence" value="ECO:0000314"/>
    <property type="project" value="MGI"/>
</dbReference>
<dbReference type="GO" id="GO:0005886">
    <property type="term" value="C:plasma membrane"/>
    <property type="evidence" value="ECO:0007669"/>
    <property type="project" value="UniProtKB-SubCell"/>
</dbReference>
<dbReference type="GO" id="GO:0098793">
    <property type="term" value="C:presynapse"/>
    <property type="evidence" value="ECO:0007669"/>
    <property type="project" value="Ensembl"/>
</dbReference>
<dbReference type="GO" id="GO:0004983">
    <property type="term" value="F:neuropeptide Y receptor activity"/>
    <property type="evidence" value="ECO:0000314"/>
    <property type="project" value="MGI"/>
</dbReference>
<dbReference type="GO" id="GO:0001601">
    <property type="term" value="F:peptide YY receptor activity"/>
    <property type="evidence" value="ECO:0000314"/>
    <property type="project" value="MGI"/>
</dbReference>
<dbReference type="GO" id="GO:0007193">
    <property type="term" value="P:adenylate cyclase-inhibiting G protein-coupled receptor signaling pathway"/>
    <property type="evidence" value="ECO:0000314"/>
    <property type="project" value="MGI"/>
</dbReference>
<dbReference type="GO" id="GO:0001662">
    <property type="term" value="P:behavioral fear response"/>
    <property type="evidence" value="ECO:0007669"/>
    <property type="project" value="Ensembl"/>
</dbReference>
<dbReference type="GO" id="GO:0003214">
    <property type="term" value="P:cardiac left ventricle morphogenesis"/>
    <property type="evidence" value="ECO:0007669"/>
    <property type="project" value="Ensembl"/>
</dbReference>
<dbReference type="GO" id="GO:0007186">
    <property type="term" value="P:G protein-coupled receptor signaling pathway"/>
    <property type="evidence" value="ECO:0000315"/>
    <property type="project" value="MGI"/>
</dbReference>
<dbReference type="GO" id="GO:0141162">
    <property type="term" value="P:negative regulation of cAMP/PKA signal transduction"/>
    <property type="evidence" value="ECO:0007669"/>
    <property type="project" value="Ensembl"/>
</dbReference>
<dbReference type="GO" id="GO:0090394">
    <property type="term" value="P:negative regulation of excitatory postsynaptic potential"/>
    <property type="evidence" value="ECO:0007669"/>
    <property type="project" value="Ensembl"/>
</dbReference>
<dbReference type="GO" id="GO:2000252">
    <property type="term" value="P:negative regulation of feeding behavior"/>
    <property type="evidence" value="ECO:0007669"/>
    <property type="project" value="Ensembl"/>
</dbReference>
<dbReference type="GO" id="GO:0031645">
    <property type="term" value="P:negative regulation of nervous system process"/>
    <property type="evidence" value="ECO:0007669"/>
    <property type="project" value="Ensembl"/>
</dbReference>
<dbReference type="GO" id="GO:0051048">
    <property type="term" value="P:negative regulation of secretion"/>
    <property type="evidence" value="ECO:0007669"/>
    <property type="project" value="Ensembl"/>
</dbReference>
<dbReference type="GO" id="GO:0051967">
    <property type="term" value="P:negative regulation of synaptic transmission, glutamatergic"/>
    <property type="evidence" value="ECO:0007669"/>
    <property type="project" value="Ensembl"/>
</dbReference>
<dbReference type="GO" id="GO:0007263">
    <property type="term" value="P:nitric oxide mediated signal transduction"/>
    <property type="evidence" value="ECO:0007669"/>
    <property type="project" value="Ensembl"/>
</dbReference>
<dbReference type="GO" id="GO:0003151">
    <property type="term" value="P:outflow tract morphogenesis"/>
    <property type="evidence" value="ECO:0007669"/>
    <property type="project" value="Ensembl"/>
</dbReference>
<dbReference type="GO" id="GO:0010811">
    <property type="term" value="P:positive regulation of cell-substrate adhesion"/>
    <property type="evidence" value="ECO:0007669"/>
    <property type="project" value="Ensembl"/>
</dbReference>
<dbReference type="GO" id="GO:0046010">
    <property type="term" value="P:positive regulation of circadian sleep/wake cycle, non-REM sleep"/>
    <property type="evidence" value="ECO:0007669"/>
    <property type="project" value="Ensembl"/>
</dbReference>
<dbReference type="GO" id="GO:0007204">
    <property type="term" value="P:positive regulation of cytosolic calcium ion concentration"/>
    <property type="evidence" value="ECO:0007669"/>
    <property type="project" value="Ensembl"/>
</dbReference>
<dbReference type="GO" id="GO:0033603">
    <property type="term" value="P:positive regulation of dopamine secretion"/>
    <property type="evidence" value="ECO:0007669"/>
    <property type="project" value="Ensembl"/>
</dbReference>
<dbReference type="GO" id="GO:0002793">
    <property type="term" value="P:positive regulation of peptide secretion"/>
    <property type="evidence" value="ECO:0007669"/>
    <property type="project" value="Ensembl"/>
</dbReference>
<dbReference type="GO" id="GO:0045987">
    <property type="term" value="P:positive regulation of smooth muscle contraction"/>
    <property type="evidence" value="ECO:0007669"/>
    <property type="project" value="Ensembl"/>
</dbReference>
<dbReference type="GO" id="GO:0099538">
    <property type="term" value="P:synaptic signaling via neuropeptide"/>
    <property type="evidence" value="ECO:0007669"/>
    <property type="project" value="Ensembl"/>
</dbReference>
<dbReference type="CDD" id="cd15399">
    <property type="entry name" value="7tmA_NPY2R"/>
    <property type="match status" value="1"/>
</dbReference>
<dbReference type="FunFam" id="1.20.1070.10:FF:000158">
    <property type="entry name" value="Neuropeptide Y receptor type 2"/>
    <property type="match status" value="1"/>
</dbReference>
<dbReference type="Gene3D" id="1.20.1070.10">
    <property type="entry name" value="Rhodopsin 7-helix transmembrane proteins"/>
    <property type="match status" value="1"/>
</dbReference>
<dbReference type="InterPro" id="IPR000276">
    <property type="entry name" value="GPCR_Rhodpsn"/>
</dbReference>
<dbReference type="InterPro" id="IPR017452">
    <property type="entry name" value="GPCR_Rhodpsn_7TM"/>
</dbReference>
<dbReference type="InterPro" id="IPR001358">
    <property type="entry name" value="NPY2_rcpt"/>
</dbReference>
<dbReference type="InterPro" id="IPR000611">
    <property type="entry name" value="NPY_rcpt"/>
</dbReference>
<dbReference type="PANTHER" id="PTHR24235">
    <property type="entry name" value="NEUROPEPTIDE Y RECEPTOR"/>
    <property type="match status" value="1"/>
</dbReference>
<dbReference type="PANTHER" id="PTHR24235:SF20">
    <property type="entry name" value="NEUROPEPTIDE Y RECEPTOR TYPE 2"/>
    <property type="match status" value="1"/>
</dbReference>
<dbReference type="Pfam" id="PF00001">
    <property type="entry name" value="7tm_1"/>
    <property type="match status" value="1"/>
</dbReference>
<dbReference type="PRINTS" id="PR00237">
    <property type="entry name" value="GPCRRHODOPSN"/>
</dbReference>
<dbReference type="PRINTS" id="PR01014">
    <property type="entry name" value="NRPEPTIDEY2R"/>
</dbReference>
<dbReference type="PRINTS" id="PR01012">
    <property type="entry name" value="NRPEPTIDEYR"/>
</dbReference>
<dbReference type="SMART" id="SM01381">
    <property type="entry name" value="7TM_GPCR_Srsx"/>
    <property type="match status" value="1"/>
</dbReference>
<dbReference type="SUPFAM" id="SSF81321">
    <property type="entry name" value="Family A G protein-coupled receptor-like"/>
    <property type="match status" value="1"/>
</dbReference>
<dbReference type="PROSITE" id="PS00237">
    <property type="entry name" value="G_PROTEIN_RECEP_F1_1"/>
    <property type="match status" value="1"/>
</dbReference>
<dbReference type="PROSITE" id="PS50262">
    <property type="entry name" value="G_PROTEIN_RECEP_F1_2"/>
    <property type="match status" value="1"/>
</dbReference>
<feature type="chain" id="PRO_0000069930" description="Neuropeptide Y receptor type 2">
    <location>
        <begin position="1"/>
        <end position="381"/>
    </location>
</feature>
<feature type="topological domain" description="Extracellular" evidence="1">
    <location>
        <begin position="1"/>
        <end position="51"/>
    </location>
</feature>
<feature type="transmembrane region" description="Helical; Name=1" evidence="1">
    <location>
        <begin position="52"/>
        <end position="72"/>
    </location>
</feature>
<feature type="topological domain" description="Cytoplasmic" evidence="1">
    <location>
        <begin position="73"/>
        <end position="86"/>
    </location>
</feature>
<feature type="transmembrane region" description="Helical; Name=2" evidence="1">
    <location>
        <begin position="87"/>
        <end position="107"/>
    </location>
</feature>
<feature type="topological domain" description="Extracellular" evidence="1">
    <location>
        <begin position="108"/>
        <end position="124"/>
    </location>
</feature>
<feature type="transmembrane region" description="Helical; Name=3" evidence="1">
    <location>
        <begin position="125"/>
        <end position="145"/>
    </location>
</feature>
<feature type="topological domain" description="Cytoplasmic" evidence="1">
    <location>
        <begin position="146"/>
        <end position="165"/>
    </location>
</feature>
<feature type="transmembrane region" description="Helical; Name=4" evidence="1">
    <location>
        <begin position="166"/>
        <end position="186"/>
    </location>
</feature>
<feature type="topological domain" description="Extracellular" evidence="1">
    <location>
        <begin position="187"/>
        <end position="216"/>
    </location>
</feature>
<feature type="transmembrane region" description="Helical; Name=5" evidence="1">
    <location>
        <begin position="217"/>
        <end position="237"/>
    </location>
</feature>
<feature type="topological domain" description="Cytoplasmic" evidence="1">
    <location>
        <begin position="238"/>
        <end position="268"/>
    </location>
</feature>
<feature type="transmembrane region" description="Helical; Name=6" evidence="1">
    <location>
        <begin position="269"/>
        <end position="289"/>
    </location>
</feature>
<feature type="topological domain" description="Extracellular" evidence="1">
    <location>
        <begin position="290"/>
        <end position="304"/>
    </location>
</feature>
<feature type="transmembrane region" description="Helical; Name=7" evidence="1">
    <location>
        <begin position="305"/>
        <end position="325"/>
    </location>
</feature>
<feature type="topological domain" description="Cytoplasmic" evidence="1">
    <location>
        <begin position="326"/>
        <end position="381"/>
    </location>
</feature>
<feature type="region of interest" description="Disordered" evidence="3">
    <location>
        <begin position="1"/>
        <end position="37"/>
    </location>
</feature>
<feature type="lipid moiety-binding region" description="S-palmitoyl cysteine" evidence="1">
    <location>
        <position position="342"/>
    </location>
</feature>
<feature type="glycosylation site" description="N-linked (GlcNAc...) asparagine" evidence="1">
    <location>
        <position position="11"/>
    </location>
</feature>
<feature type="disulfide bond" evidence="2">
    <location>
        <begin position="123"/>
        <end position="203"/>
    </location>
</feature>
<comment type="function">
    <text>Receptor for neuropeptide Y and peptide YY.</text>
</comment>
<comment type="subcellular location">
    <subcellularLocation>
        <location>Cell membrane</location>
        <topology>Multi-pass membrane protein</topology>
    </subcellularLocation>
</comment>
<comment type="similarity">
    <text evidence="2">Belongs to the G-protein coupled receptor 1 family.</text>
</comment>
<comment type="sequence caution" evidence="4">
    <conflict type="erroneous initiation">
        <sequence resource="EMBL-CDS" id="BAA13050"/>
    </conflict>
    <text>Extended N-terminus.</text>
</comment>
<keyword id="KW-1003">Cell membrane</keyword>
<keyword id="KW-1015">Disulfide bond</keyword>
<keyword id="KW-0297">G-protein coupled receptor</keyword>
<keyword id="KW-0325">Glycoprotein</keyword>
<keyword id="KW-0449">Lipoprotein</keyword>
<keyword id="KW-0472">Membrane</keyword>
<keyword id="KW-0564">Palmitate</keyword>
<keyword id="KW-0675">Receptor</keyword>
<keyword id="KW-1185">Reference proteome</keyword>
<keyword id="KW-0807">Transducer</keyword>
<keyword id="KW-0812">Transmembrane</keyword>
<keyword id="KW-1133">Transmembrane helix</keyword>
<gene>
    <name type="primary">Npy2r</name>
</gene>
<organism>
    <name type="scientific">Mus musculus</name>
    <name type="common">Mouse</name>
    <dbReference type="NCBI Taxonomy" id="10090"/>
    <lineage>
        <taxon>Eukaryota</taxon>
        <taxon>Metazoa</taxon>
        <taxon>Chordata</taxon>
        <taxon>Craniata</taxon>
        <taxon>Vertebrata</taxon>
        <taxon>Euteleostomi</taxon>
        <taxon>Mammalia</taxon>
        <taxon>Eutheria</taxon>
        <taxon>Euarchontoglires</taxon>
        <taxon>Glires</taxon>
        <taxon>Rodentia</taxon>
        <taxon>Myomorpha</taxon>
        <taxon>Muroidea</taxon>
        <taxon>Muridae</taxon>
        <taxon>Murinae</taxon>
        <taxon>Mus</taxon>
        <taxon>Mus</taxon>
    </lineage>
</organism>